<accession>Q1QPM0</accession>
<feature type="chain" id="PRO_1000066866" description="UPF0229 protein Nham_0975">
    <location>
        <begin position="1"/>
        <end position="439"/>
    </location>
</feature>
<feature type="region of interest" description="Disordered" evidence="2">
    <location>
        <begin position="39"/>
        <end position="106"/>
    </location>
</feature>
<feature type="compositionally biased region" description="Basic and acidic residues" evidence="2">
    <location>
        <begin position="58"/>
        <end position="76"/>
    </location>
</feature>
<protein>
    <recommendedName>
        <fullName evidence="1">UPF0229 protein Nham_0975</fullName>
    </recommendedName>
</protein>
<proteinExistence type="inferred from homology"/>
<name>Y975_NITHX</name>
<sequence length="439" mass="50617">MPIFIDRRLNPKDRSLGNRQRFLRRAREELKRSIRDRVRSGRISDADGEQAVSIPTRSTDEPRFEAAKDSGRREHVLPGNKHFVPGDRLRKPGHGAAGTPDPSMKDSEDDFRFVLSREEVLDLFFEDLELPDMVKLSLKEILAFRPRRAGFAATGSPTNINVGRTMRNSYGRRIALKRPKREEVDAIRQEIAELESGSQSPVARQRIAALQAEVERLERKRRLIAYVDPVDIRFNRFEAQPIPNAKAVMFCLMDVSGSMGEREKDLAKRFFVLLHLFLKCRYDRTEIVFISHTHEAQEVNEETFFYSTQSGGTVVSTALEKMHRIIAERYPGSEWNIYAAQASDGDNAAADSHRCITLLDEEIMRLCQYYAYVEIIDERERHIFGTTENGTSLWRAYSSVNANWPNFQMTRIADAADIYPVFRQLFTRQATAEKLRVRR</sequence>
<gene>
    <name type="ordered locus">Nham_0975</name>
</gene>
<dbReference type="EMBL" id="CP000319">
    <property type="protein sequence ID" value="ABE61827.1"/>
    <property type="molecule type" value="Genomic_DNA"/>
</dbReference>
<dbReference type="RefSeq" id="WP_011509523.1">
    <property type="nucleotide sequence ID" value="NC_007964.1"/>
</dbReference>
<dbReference type="STRING" id="323097.Nham_0975"/>
<dbReference type="KEGG" id="nha:Nham_0975"/>
<dbReference type="eggNOG" id="COG2718">
    <property type="taxonomic scope" value="Bacteria"/>
</dbReference>
<dbReference type="HOGENOM" id="CLU_049702_0_0_5"/>
<dbReference type="OrthoDB" id="9788289at2"/>
<dbReference type="Proteomes" id="UP000001953">
    <property type="component" value="Chromosome"/>
</dbReference>
<dbReference type="HAMAP" id="MF_01232">
    <property type="entry name" value="UPF0229"/>
    <property type="match status" value="1"/>
</dbReference>
<dbReference type="InterPro" id="IPR006698">
    <property type="entry name" value="UPF0229"/>
</dbReference>
<dbReference type="InterPro" id="IPR036465">
    <property type="entry name" value="vWFA_dom_sf"/>
</dbReference>
<dbReference type="NCBIfam" id="NF003707">
    <property type="entry name" value="PRK05325.1-2"/>
    <property type="match status" value="1"/>
</dbReference>
<dbReference type="NCBIfam" id="NF003708">
    <property type="entry name" value="PRK05325.1-3"/>
    <property type="match status" value="1"/>
</dbReference>
<dbReference type="PANTHER" id="PTHR30510">
    <property type="entry name" value="UPF0229 PROTEIN YEAH"/>
    <property type="match status" value="1"/>
</dbReference>
<dbReference type="PANTHER" id="PTHR30510:SF2">
    <property type="entry name" value="UPF0229 PROTEIN YEAH"/>
    <property type="match status" value="1"/>
</dbReference>
<dbReference type="Pfam" id="PF04285">
    <property type="entry name" value="DUF444"/>
    <property type="match status" value="1"/>
</dbReference>
<dbReference type="SUPFAM" id="SSF53300">
    <property type="entry name" value="vWA-like"/>
    <property type="match status" value="1"/>
</dbReference>
<organism>
    <name type="scientific">Nitrobacter hamburgensis (strain DSM 10229 / NCIMB 13809 / X14)</name>
    <dbReference type="NCBI Taxonomy" id="323097"/>
    <lineage>
        <taxon>Bacteria</taxon>
        <taxon>Pseudomonadati</taxon>
        <taxon>Pseudomonadota</taxon>
        <taxon>Alphaproteobacteria</taxon>
        <taxon>Hyphomicrobiales</taxon>
        <taxon>Nitrobacteraceae</taxon>
        <taxon>Nitrobacter</taxon>
    </lineage>
</organism>
<evidence type="ECO:0000255" key="1">
    <source>
        <dbReference type="HAMAP-Rule" id="MF_01232"/>
    </source>
</evidence>
<evidence type="ECO:0000256" key="2">
    <source>
        <dbReference type="SAM" id="MobiDB-lite"/>
    </source>
</evidence>
<keyword id="KW-1185">Reference proteome</keyword>
<comment type="similarity">
    <text evidence="1">Belongs to the UPF0229 family.</text>
</comment>
<reference key="1">
    <citation type="submission" date="2006-03" db="EMBL/GenBank/DDBJ databases">
        <title>Complete sequence of chromosome of Nitrobacter hamburgensis X14.</title>
        <authorList>
            <consortium name="US DOE Joint Genome Institute"/>
            <person name="Copeland A."/>
            <person name="Lucas S."/>
            <person name="Lapidus A."/>
            <person name="Barry K."/>
            <person name="Detter J.C."/>
            <person name="Glavina del Rio T."/>
            <person name="Hammon N."/>
            <person name="Israni S."/>
            <person name="Dalin E."/>
            <person name="Tice H."/>
            <person name="Pitluck S."/>
            <person name="Chain P."/>
            <person name="Malfatti S."/>
            <person name="Shin M."/>
            <person name="Vergez L."/>
            <person name="Schmutz J."/>
            <person name="Larimer F."/>
            <person name="Land M."/>
            <person name="Hauser L."/>
            <person name="Kyrpides N."/>
            <person name="Ivanova N."/>
            <person name="Ward B."/>
            <person name="Arp D."/>
            <person name="Klotz M."/>
            <person name="Stein L."/>
            <person name="O'Mullan G."/>
            <person name="Starkenburg S."/>
            <person name="Sayavedra L."/>
            <person name="Poret-Peterson A.T."/>
            <person name="Gentry M.E."/>
            <person name="Bruce D."/>
            <person name="Richardson P."/>
        </authorList>
    </citation>
    <scope>NUCLEOTIDE SEQUENCE [LARGE SCALE GENOMIC DNA]</scope>
    <source>
        <strain>DSM 10229 / NCIMB 13809 / X14</strain>
    </source>
</reference>